<dbReference type="GO" id="GO:0031012">
    <property type="term" value="C:extracellular matrix"/>
    <property type="evidence" value="ECO:0007669"/>
    <property type="project" value="TreeGrafter"/>
</dbReference>
<dbReference type="GO" id="GO:0005615">
    <property type="term" value="C:extracellular space"/>
    <property type="evidence" value="ECO:0007669"/>
    <property type="project" value="TreeGrafter"/>
</dbReference>
<dbReference type="InterPro" id="IPR008160">
    <property type="entry name" value="Collagen"/>
</dbReference>
<dbReference type="InterPro" id="IPR050149">
    <property type="entry name" value="Collagen_superfamily"/>
</dbReference>
<dbReference type="PANTHER" id="PTHR24023">
    <property type="entry name" value="COLLAGEN ALPHA"/>
    <property type="match status" value="1"/>
</dbReference>
<dbReference type="PANTHER" id="PTHR24023:SF1082">
    <property type="entry name" value="COLLAGEN TRIPLE HELIX REPEAT"/>
    <property type="match status" value="1"/>
</dbReference>
<dbReference type="Pfam" id="PF01391">
    <property type="entry name" value="Collagen"/>
    <property type="match status" value="5"/>
</dbReference>
<accession>C0HLH2</accession>
<organism evidence="4">
    <name type="scientific">Acratocnus ye</name>
    <name type="common">Hispaniolan ground sloth</name>
    <dbReference type="NCBI Taxonomy" id="2546656"/>
    <lineage>
        <taxon>Eukaryota</taxon>
        <taxon>Metazoa</taxon>
        <taxon>Chordata</taxon>
        <taxon>Craniata</taxon>
        <taxon>Vertebrata</taxon>
        <taxon>Euteleostomi</taxon>
        <taxon>Mammalia</taxon>
        <taxon>Eutheria</taxon>
        <taxon>Xenarthra</taxon>
        <taxon>Pilosa</taxon>
        <taxon>Folivora</taxon>
        <taxon>Megalonychidae</taxon>
        <taxon>Acratocnus</taxon>
    </lineage>
</organism>
<keyword id="KW-0903">Direct protein sequencing</keyword>
<keyword id="KW-0952">Extinct organism protein</keyword>
<keyword id="KW-0272">Extracellular matrix</keyword>
<keyword id="KW-0325">Glycoprotein</keyword>
<keyword id="KW-0379">Hydroxylation</keyword>
<keyword id="KW-0964">Secreted</keyword>
<name>CO1A2_ACRYE</name>
<feature type="chain" id="PRO_0000448453" description="Collagen alpha-2(I) chain">
    <location>
        <begin position="1"/>
        <end position="949"/>
    </location>
</feature>
<feature type="region of interest" description="Disordered" evidence="2">
    <location>
        <begin position="1"/>
        <end position="949"/>
    </location>
</feature>
<feature type="compositionally biased region" description="Low complexity" evidence="2">
    <location>
        <begin position="27"/>
        <end position="66"/>
    </location>
</feature>
<feature type="compositionally biased region" description="Low complexity" evidence="2">
    <location>
        <begin position="147"/>
        <end position="162"/>
    </location>
</feature>
<feature type="compositionally biased region" description="Low complexity" evidence="2">
    <location>
        <begin position="208"/>
        <end position="229"/>
    </location>
</feature>
<feature type="compositionally biased region" description="Gly residues" evidence="2">
    <location>
        <begin position="263"/>
        <end position="272"/>
    </location>
</feature>
<feature type="compositionally biased region" description="Low complexity" evidence="2">
    <location>
        <begin position="273"/>
        <end position="283"/>
    </location>
</feature>
<feature type="compositionally biased region" description="Gly residues" evidence="2">
    <location>
        <begin position="292"/>
        <end position="313"/>
    </location>
</feature>
<feature type="compositionally biased region" description="Low complexity" evidence="2">
    <location>
        <begin position="377"/>
        <end position="396"/>
    </location>
</feature>
<feature type="compositionally biased region" description="Gly residues" evidence="2">
    <location>
        <begin position="435"/>
        <end position="444"/>
    </location>
</feature>
<feature type="compositionally biased region" description="Low complexity" evidence="2">
    <location>
        <begin position="490"/>
        <end position="507"/>
    </location>
</feature>
<feature type="compositionally biased region" description="Low complexity" evidence="2">
    <location>
        <begin position="519"/>
        <end position="529"/>
    </location>
</feature>
<feature type="compositionally biased region" description="Gly residues" evidence="2">
    <location>
        <begin position="530"/>
        <end position="539"/>
    </location>
</feature>
<feature type="compositionally biased region" description="Low complexity" evidence="2">
    <location>
        <begin position="562"/>
        <end position="606"/>
    </location>
</feature>
<feature type="compositionally biased region" description="Low complexity" evidence="2">
    <location>
        <begin position="613"/>
        <end position="633"/>
    </location>
</feature>
<feature type="compositionally biased region" description="Basic and acidic residues" evidence="2">
    <location>
        <begin position="634"/>
        <end position="643"/>
    </location>
</feature>
<feature type="compositionally biased region" description="Low complexity" evidence="2">
    <location>
        <begin position="651"/>
        <end position="661"/>
    </location>
</feature>
<feature type="compositionally biased region" description="Gly residues" evidence="2">
    <location>
        <begin position="671"/>
        <end position="680"/>
    </location>
</feature>
<feature type="compositionally biased region" description="Low complexity" evidence="2">
    <location>
        <begin position="682"/>
        <end position="691"/>
    </location>
</feature>
<feature type="compositionally biased region" description="Gly residues" evidence="2">
    <location>
        <begin position="722"/>
        <end position="736"/>
    </location>
</feature>
<feature type="compositionally biased region" description="Low complexity" evidence="2">
    <location>
        <begin position="737"/>
        <end position="771"/>
    </location>
</feature>
<feature type="compositionally biased region" description="Low complexity" evidence="2">
    <location>
        <begin position="779"/>
        <end position="792"/>
    </location>
</feature>
<feature type="compositionally biased region" description="Low complexity" evidence="2">
    <location>
        <begin position="810"/>
        <end position="825"/>
    </location>
</feature>
<feature type="compositionally biased region" description="Basic and acidic residues" evidence="2">
    <location>
        <begin position="835"/>
        <end position="846"/>
    </location>
</feature>
<feature type="compositionally biased region" description="Pro residues" evidence="2">
    <location>
        <begin position="921"/>
        <end position="931"/>
    </location>
</feature>
<feature type="modified residue" description="4-hydroxyproline" evidence="1">
    <location>
        <position position="10"/>
    </location>
</feature>
<feature type="modified residue" description="4-hydroxyproline" evidence="1">
    <location>
        <position position="13"/>
    </location>
</feature>
<feature type="modified residue" description="4-hydroxyproline" evidence="1">
    <location>
        <position position="34"/>
    </location>
</feature>
<feature type="modified residue" description="4-hydroxyproline" evidence="1">
    <location>
        <position position="40"/>
    </location>
</feature>
<feature type="modified residue" description="5-hydroxylysine; alternate" evidence="1">
    <location>
        <position position="95"/>
    </location>
</feature>
<feature type="modified residue" description="4-hydroxyproline" evidence="1">
    <location>
        <position position="348"/>
    </location>
</feature>
<feature type="modified residue" description="4-hydroxyproline" evidence="1">
    <location>
        <position position="351"/>
    </location>
</feature>
<feature type="glycosylation site" description="O-linked (Gal...) hydroxylysine; alternate" evidence="1">
    <location>
        <position position="95"/>
    </location>
</feature>
<feature type="unsure residue" description="L or I" evidence="4">
    <location>
        <position position="9"/>
    </location>
</feature>
<feature type="unsure residue" description="L or I" evidence="4">
    <location>
        <position position="20"/>
    </location>
</feature>
<feature type="unsure residue" description="L or I" evidence="4">
    <location>
        <position position="27"/>
    </location>
</feature>
<feature type="unsure residue" description="L or I" evidence="4">
    <location>
        <position position="91"/>
    </location>
</feature>
<feature type="unsure residue" description="L or I" evidence="4">
    <location>
        <position position="103"/>
    </location>
</feature>
<feature type="unsure residue" description="L or I" evidence="4">
    <location>
        <position position="106"/>
    </location>
</feature>
<feature type="unsure residue" description="L or I" evidence="4">
    <location>
        <position position="127"/>
    </location>
</feature>
<feature type="unsure residue" description="L or I" evidence="4">
    <location>
        <position position="175"/>
    </location>
</feature>
<feature type="unsure residue" description="L or I" evidence="4">
    <location>
        <position position="195"/>
    </location>
</feature>
<feature type="unsure residue" description="L or I" evidence="4">
    <location>
        <position position="213"/>
    </location>
</feature>
<feature type="unsure residue" description="L or I" evidence="4">
    <location>
        <position position="222"/>
    </location>
</feature>
<feature type="unsure residue" description="L or I" evidence="4">
    <location>
        <position position="231"/>
    </location>
</feature>
<feature type="unsure residue" description="L or I" evidence="4">
    <location>
        <position position="252"/>
    </location>
</feature>
<feature type="unsure residue" description="L or I" evidence="4">
    <location>
        <position position="305"/>
    </location>
</feature>
<feature type="unsure residue" description="L or I" evidence="4">
    <location>
        <position position="314"/>
    </location>
</feature>
<feature type="unsure residue" description="L or I" evidence="4">
    <location>
        <position position="326"/>
    </location>
</feature>
<feature type="unsure residue" description="L or I" evidence="4">
    <location>
        <position position="353"/>
    </location>
</feature>
<feature type="unsure residue" description="L or I" evidence="4">
    <location>
        <position position="359"/>
    </location>
</feature>
<feature type="unsure residue" description="L or I" evidence="4">
    <location>
        <position position="377"/>
    </location>
</feature>
<feature type="unsure residue" description="L or I" evidence="4">
    <location>
        <position position="433"/>
    </location>
</feature>
<feature type="unsure residue" description="L or I" evidence="4">
    <location>
        <position position="454"/>
    </location>
</feature>
<feature type="unsure residue" description="L or I" evidence="4">
    <location>
        <position position="477"/>
    </location>
</feature>
<feature type="unsure residue" description="L or I" evidence="4">
    <location>
        <position position="537"/>
    </location>
</feature>
<feature type="unsure residue" description="L or I" evidence="4">
    <location>
        <position position="558"/>
    </location>
</feature>
<feature type="unsure residue" description="L or I" evidence="4">
    <location>
        <position position="714"/>
    </location>
</feature>
<feature type="unsure residue" description="L or I" evidence="4">
    <location>
        <position position="761"/>
    </location>
</feature>
<feature type="unsure residue" description="L or I" evidence="4">
    <location>
        <position position="762"/>
    </location>
</feature>
<feature type="unsure residue" description="L or I" evidence="4">
    <location>
        <position position="768"/>
    </location>
</feature>
<feature type="unsure residue" description="L or I" evidence="4">
    <location>
        <position position="770"/>
    </location>
</feature>
<feature type="unsure residue" description="L or I" evidence="4">
    <location>
        <position position="779"/>
    </location>
</feature>
<feature type="unsure residue" description="L or I" evidence="4">
    <location>
        <position position="792"/>
    </location>
</feature>
<feature type="unsure residue" description="L or I" evidence="4">
    <location>
        <position position="823"/>
    </location>
</feature>
<feature type="unsure residue" description="L or I" evidence="4">
    <location>
        <position position="849"/>
    </location>
</feature>
<feature type="unsure residue" description="L or I" evidence="4">
    <location>
        <position position="852"/>
    </location>
</feature>
<feature type="unsure residue" description="L or I" evidence="4">
    <location>
        <position position="858"/>
    </location>
</feature>
<feature type="unsure residue" description="L or I" evidence="4">
    <location>
        <position position="861"/>
    </location>
</feature>
<feature type="unsure residue" description="L or I" evidence="4">
    <location>
        <position position="864"/>
    </location>
</feature>
<feature type="non-consecutive residues" evidence="4">
    <location>
        <begin position="17"/>
        <end position="18"/>
    </location>
</feature>
<feature type="non-consecutive residues" evidence="4">
    <location>
        <begin position="74"/>
        <end position="75"/>
    </location>
</feature>
<feature type="non-consecutive residues" evidence="4">
    <location>
        <begin position="107"/>
        <end position="108"/>
    </location>
</feature>
<feature type="non-consecutive residues" evidence="4">
    <location>
        <begin position="141"/>
        <end position="142"/>
    </location>
</feature>
<feature type="non-consecutive residues" evidence="4">
    <location>
        <begin position="294"/>
        <end position="295"/>
    </location>
</feature>
<feature type="non-consecutive residues" evidence="4">
    <location>
        <begin position="413"/>
        <end position="414"/>
    </location>
</feature>
<feature type="non-consecutive residues" evidence="4">
    <location>
        <begin position="471"/>
        <end position="472"/>
    </location>
</feature>
<feature type="non-consecutive residues" evidence="4">
    <location>
        <begin position="726"/>
        <end position="727"/>
    </location>
</feature>
<feature type="non-consecutive residues" evidence="4">
    <location>
        <begin position="802"/>
        <end position="803"/>
    </location>
</feature>
<feature type="non-consecutive residues" evidence="4">
    <location>
        <begin position="891"/>
        <end position="892"/>
    </location>
</feature>
<feature type="non-terminal residue" evidence="4">
    <location>
        <position position="1"/>
    </location>
</feature>
<feature type="non-terminal residue" evidence="4">
    <location>
        <position position="949"/>
    </location>
</feature>
<reference evidence="5" key="1">
    <citation type="journal article" date="2019" name="Nat. Ecol. Evol.">
        <title>Palaeoproteomics resolves sloth relationships.</title>
        <authorList>
            <person name="Presslee S."/>
            <person name="Slater G.J."/>
            <person name="Pujos F."/>
            <person name="Forasiepi A.M."/>
            <person name="Fischer R."/>
            <person name="Molloy K."/>
            <person name="Mackie M."/>
            <person name="Olsen J.V."/>
            <person name="Kramarz A."/>
            <person name="Taglioretti M."/>
            <person name="Scaglia F."/>
            <person name="Lezcano M."/>
            <person name="Lanata J.L."/>
            <person name="Southon J."/>
            <person name="Feranec R."/>
            <person name="Bloch J."/>
            <person name="Hajduk A."/>
            <person name="Martin F.M."/>
            <person name="Salas Gismondi R."/>
            <person name="Reguero M."/>
            <person name="de Muizon C."/>
            <person name="Greenwood A."/>
            <person name="Chait B.T."/>
            <person name="Penkman K."/>
            <person name="Collins M."/>
            <person name="MacPhee R.D.E."/>
        </authorList>
    </citation>
    <scope>PROTEIN SEQUENCE</scope>
    <scope>TISSUE SPECIFICITY</scope>
    <scope>IDENTIFICATION BY MASS SPECTROMETRY</scope>
    <source>
        <tissue evidence="4">Bone</tissue>
    </source>
</reference>
<sequence>SGGFDFSFLPQPPQEKAVGLGPGPMGLMGPRGPPGASGAPGPQGFQGPAGEPGEPGQTGPAGARGPAGPPGKAGGVVGPQGARGFPGTPGLPGFKGIRGHNGLDGLKGEPGAPGENGTPGQTGARGLPGERGRVGAPGPAGRGSDGSVGPVGPAGPIGSAGPPGFPGAPGPKGELGPVGNTGPAGPAGPRGEQGLPGVSGPVGPPGNPGANGLTGAKGAAGLPGVAGAPGLPGPRGIPGPVGASGATGARGLVGEPGPAGSKGESGGKGEPGSAGPQGPPGSSGEEGKRGPNGEGSTGPTGPPGLRGGPGSRGLPGADGRAGVIGLAGARGASGPAGVRGPSGDTGRPGEPGLMGARGLPGSPGNVGPAGKEGPVGLPGIDGRPGPIGPAGARGEAGNIGFPGPKGPAGDPGKGNRGAPGPDGNNGAQGPPGLQGVQGGKGEQGPAGPPGFQGLPGPAGTTGEAGKPGERGPGEFGLPGPAGPRGERGPPGESGAVGPSGAIGSRGPSGPPGPDGNKGEPGVVGAPGTAGPAGSGGLPGERGAAGIPGGKGEKGETGLRGEVGTTGRDGARGAPGAVGAPGPAGATGDRGEAGAAGPAGPAGPRGSPGERGEVGPAGPNGFAGPAGAAGQPGAKGERGTKGPKGENGIVGPTGPVGSAGPAGPNGPAGPAGSRGDGGPPGVTGFPGAAGRTGPPGPSGITGPPGPPGAAGKEGLRGPRGDQGPVGRGETGAGGPPGFTGEKGPSGEPGTAGPPGTAGPQGLLGAPGILGLPGSRGERGLPGVAGAVGEPGPLGISGPPGARGGKHGNRGEPGPVGSVGPVGALGPRGPSGPQGIRGDKGEPGEKGPRGLPGLKGHNGLQGLPGLAGQHGDQGSPGPVGPAGPRGPAGPSGPPGKDGRTGHPGAVGPAGIRGSQGSQGPSGPAGPPGPPGPPGASGGGYDFGYEGDFYRA</sequence>
<proteinExistence type="evidence at protein level"/>
<protein>
    <recommendedName>
        <fullName evidence="4">Collagen alpha-2(I) chain</fullName>
    </recommendedName>
    <alternativeName>
        <fullName evidence="1">Alpha-2 type I collagen</fullName>
    </alternativeName>
</protein>
<evidence type="ECO:0000250" key="1">
    <source>
        <dbReference type="UniProtKB" id="P08123"/>
    </source>
</evidence>
<evidence type="ECO:0000256" key="2">
    <source>
        <dbReference type="SAM" id="MobiDB-lite"/>
    </source>
</evidence>
<evidence type="ECO:0000269" key="3">
    <source>
    </source>
</evidence>
<evidence type="ECO:0000303" key="4">
    <source>
    </source>
</evidence>
<evidence type="ECO:0000305" key="5"/>
<comment type="function">
    <text evidence="5">Type I collagen is a member of group I collagen (fibrillar forming collagen).</text>
</comment>
<comment type="subunit">
    <text evidence="1">Trimers of one alpha 2(I) and two alpha 1(I) chains. Interacts (via C-terminus) with TMEM131 (via PapD-L domain); the interaction is direct and is involved in assembly and TRAPPIII ER-to-Golgi transport complex-dependent secretion of collagen.</text>
</comment>
<comment type="subcellular location">
    <subcellularLocation>
        <location>Secreted</location>
    </subcellularLocation>
    <subcellularLocation>
        <location>Secreted</location>
        <location>Extracellular space</location>
    </subcellularLocation>
    <subcellularLocation>
        <location evidence="5">Secreted</location>
        <location evidence="5">Extracellular space</location>
        <location evidence="5">Extracellular matrix</location>
    </subcellularLocation>
</comment>
<comment type="tissue specificity">
    <text evidence="3">Expressed in bones.</text>
</comment>
<comment type="PTM">
    <text evidence="1">Prolines at the third position of the tripeptide repeating unit (G-X-Y) are hydroxylated in some or all of the chains.</text>
</comment>
<comment type="miscellaneous">
    <text evidence="3">These protein fragments were extracted from an ancient mandible bone collected in Haiti.</text>
</comment>
<comment type="similarity">
    <text evidence="5">Belongs to the fibrillar collagen family.</text>
</comment>